<sequence>MAGGTLYTYPDNWRAYKPLIAAQYSGFPIKVASSAPEFQFGVTNKTPEFLKKFPLGKVPAFEGKDGFCLFESSAIAHYVGNDELRGTTRLHQAQVIQWVSFSDSHIVPPASAWVFPTLGIMQYNKQATEQAKEGIKTVLGVLDSHLQTRTFLVGERITLADITVTCSLLWLYKQVLEPSFRQPFGNVTRWFVTCVNQPEFRAVLGEVKLCDKMAQFDAKKFAEMQPKKETPKKEKPAKEPKKEKEEKKKAAPTPAPAPEDDLDESEKALAAEPKSKDPYAHLPKSSFIMDEFKRKYSNEDTLTVALPYFWEHFDKEGWSIWYAEYKFPEELTQAFMSCNLITGMFQRLDKLRKTGFASVILFGTNNNSSISGVWVFRGQDLAFTLSEDWQIDYESYNWRKLDSGSEECKTLVKEYFAWEGEFKNVGKPFNQGKIFK</sequence>
<name>EF1GA_XENLA</name>
<organism>
    <name type="scientific">Xenopus laevis</name>
    <name type="common">African clawed frog</name>
    <dbReference type="NCBI Taxonomy" id="8355"/>
    <lineage>
        <taxon>Eukaryota</taxon>
        <taxon>Metazoa</taxon>
        <taxon>Chordata</taxon>
        <taxon>Craniata</taxon>
        <taxon>Vertebrata</taxon>
        <taxon>Euteleostomi</taxon>
        <taxon>Amphibia</taxon>
        <taxon>Batrachia</taxon>
        <taxon>Anura</taxon>
        <taxon>Pipoidea</taxon>
        <taxon>Pipidae</taxon>
        <taxon>Xenopodinae</taxon>
        <taxon>Xenopus</taxon>
        <taxon>Xenopus</taxon>
    </lineage>
</organism>
<gene>
    <name type="primary">eef1g-a</name>
</gene>
<keyword id="KW-0903">Direct protein sequencing</keyword>
<keyword id="KW-0251">Elongation factor</keyword>
<keyword id="KW-0597">Phosphoprotein</keyword>
<keyword id="KW-0648">Protein biosynthesis</keyword>
<keyword id="KW-1185">Reference proteome</keyword>
<feature type="chain" id="PRO_0000208820" description="Elongation factor 1-gamma-A">
    <location>
        <begin position="1"/>
        <end position="436"/>
    </location>
</feature>
<feature type="domain" description="GST N-terminal">
    <location>
        <begin position="2"/>
        <end position="87"/>
    </location>
</feature>
<feature type="domain" description="GST C-terminal">
    <location>
        <begin position="88"/>
        <end position="221"/>
    </location>
</feature>
<feature type="domain" description="EF-1-gamma C-terminal" evidence="1">
    <location>
        <begin position="275"/>
        <end position="436"/>
    </location>
</feature>
<feature type="region of interest" description="Disordered" evidence="2">
    <location>
        <begin position="221"/>
        <end position="278"/>
    </location>
</feature>
<feature type="compositionally biased region" description="Basic and acidic residues" evidence="2">
    <location>
        <begin position="221"/>
        <end position="249"/>
    </location>
</feature>
<feature type="compositionally biased region" description="Basic and acidic residues" evidence="2">
    <location>
        <begin position="265"/>
        <end position="278"/>
    </location>
</feature>
<feature type="sequence conflict" description="In Ref. 3; AA sequence." evidence="4" ref="3">
    <original>H</original>
    <variation>A</variation>
    <location>
        <position position="77"/>
    </location>
</feature>
<feature type="sequence conflict" description="In Ref. 2; AAB29957." evidence="4" ref="2">
    <original>G</original>
    <variation>E</variation>
    <location>
        <position position="134"/>
    </location>
</feature>
<feature type="sequence conflict" description="In Ref. 3; AA sequence." evidence="4" ref="3">
    <location>
        <position position="270"/>
    </location>
</feature>
<proteinExistence type="evidence at protein level"/>
<evidence type="ECO:0000255" key="1">
    <source>
        <dbReference type="PROSITE-ProRule" id="PRU00519"/>
    </source>
</evidence>
<evidence type="ECO:0000256" key="2">
    <source>
        <dbReference type="SAM" id="MobiDB-lite"/>
    </source>
</evidence>
<evidence type="ECO:0000269" key="3">
    <source>
    </source>
</evidence>
<evidence type="ECO:0000305" key="4"/>
<dbReference type="EMBL" id="X62508">
    <property type="protein sequence ID" value="CAA44367.1"/>
    <property type="molecule type" value="mRNA"/>
</dbReference>
<dbReference type="EMBL" id="S69724">
    <property type="protein sequence ID" value="AAB29957.1"/>
    <property type="molecule type" value="mRNA"/>
</dbReference>
<dbReference type="PIR" id="I51237">
    <property type="entry name" value="I51237"/>
</dbReference>
<dbReference type="PIR" id="S20060">
    <property type="entry name" value="S20060"/>
</dbReference>
<dbReference type="SMR" id="P26642"/>
<dbReference type="IntAct" id="P26642">
    <property type="interactions" value="2"/>
</dbReference>
<dbReference type="AGR" id="Xenbase:XB-GENE-975020"/>
<dbReference type="Xenbase" id="XB-GENE-975020">
    <property type="gene designation" value="eef1g.L"/>
</dbReference>
<dbReference type="Proteomes" id="UP000186698">
    <property type="component" value="Unplaced"/>
</dbReference>
<dbReference type="GO" id="GO:0005737">
    <property type="term" value="C:cytoplasm"/>
    <property type="evidence" value="ECO:0000318"/>
    <property type="project" value="GO_Central"/>
</dbReference>
<dbReference type="GO" id="GO:0005634">
    <property type="term" value="C:nucleus"/>
    <property type="evidence" value="ECO:0000318"/>
    <property type="project" value="GO_Central"/>
</dbReference>
<dbReference type="GO" id="GO:0003746">
    <property type="term" value="F:translation elongation factor activity"/>
    <property type="evidence" value="ECO:0007669"/>
    <property type="project" value="UniProtKB-KW"/>
</dbReference>
<dbReference type="GO" id="GO:0006414">
    <property type="term" value="P:translational elongation"/>
    <property type="evidence" value="ECO:0000318"/>
    <property type="project" value="GO_Central"/>
</dbReference>
<dbReference type="CDD" id="cd03181">
    <property type="entry name" value="GST_C_EF1Bgamma_like"/>
    <property type="match status" value="1"/>
</dbReference>
<dbReference type="CDD" id="cd03044">
    <property type="entry name" value="GST_N_EF1Bgamma"/>
    <property type="match status" value="1"/>
</dbReference>
<dbReference type="FunFam" id="1.20.1050.10:FF:000021">
    <property type="entry name" value="Elongation factor 1-gamma"/>
    <property type="match status" value="1"/>
</dbReference>
<dbReference type="FunFam" id="3.40.30.10:FF:000088">
    <property type="entry name" value="Elongation factor 1-gamma"/>
    <property type="match status" value="1"/>
</dbReference>
<dbReference type="FunFam" id="3.30.70.1010:FF:000001">
    <property type="entry name" value="Elongation factor 1-gamma 1"/>
    <property type="match status" value="1"/>
</dbReference>
<dbReference type="Gene3D" id="1.20.1050.10">
    <property type="match status" value="1"/>
</dbReference>
<dbReference type="Gene3D" id="3.40.30.10">
    <property type="entry name" value="Glutaredoxin"/>
    <property type="match status" value="1"/>
</dbReference>
<dbReference type="Gene3D" id="3.30.70.1010">
    <property type="entry name" value="Translation elongation factor EF1B, gamma chain, conserved domain"/>
    <property type="match status" value="1"/>
</dbReference>
<dbReference type="InterPro" id="IPR050802">
    <property type="entry name" value="EF-GSTs"/>
</dbReference>
<dbReference type="InterPro" id="IPR001662">
    <property type="entry name" value="EF1B_G_C"/>
</dbReference>
<dbReference type="InterPro" id="IPR036433">
    <property type="entry name" value="EF1B_G_C_sf"/>
</dbReference>
<dbReference type="InterPro" id="IPR010987">
    <property type="entry name" value="Glutathione-S-Trfase_C-like"/>
</dbReference>
<dbReference type="InterPro" id="IPR036282">
    <property type="entry name" value="Glutathione-S-Trfase_C_sf"/>
</dbReference>
<dbReference type="InterPro" id="IPR040079">
    <property type="entry name" value="Glutathione_S-Trfase"/>
</dbReference>
<dbReference type="InterPro" id="IPR004045">
    <property type="entry name" value="Glutathione_S-Trfase_N"/>
</dbReference>
<dbReference type="InterPro" id="IPR004046">
    <property type="entry name" value="GST_C"/>
</dbReference>
<dbReference type="InterPro" id="IPR036249">
    <property type="entry name" value="Thioredoxin-like_sf"/>
</dbReference>
<dbReference type="PANTHER" id="PTHR43986">
    <property type="entry name" value="ELONGATION FACTOR 1-GAMMA"/>
    <property type="match status" value="1"/>
</dbReference>
<dbReference type="PANTHER" id="PTHR43986:SF1">
    <property type="entry name" value="ELONGATION FACTOR 1-GAMMA"/>
    <property type="match status" value="1"/>
</dbReference>
<dbReference type="Pfam" id="PF00647">
    <property type="entry name" value="EF1G"/>
    <property type="match status" value="1"/>
</dbReference>
<dbReference type="Pfam" id="PF00043">
    <property type="entry name" value="GST_C"/>
    <property type="match status" value="1"/>
</dbReference>
<dbReference type="Pfam" id="PF02798">
    <property type="entry name" value="GST_N"/>
    <property type="match status" value="1"/>
</dbReference>
<dbReference type="SFLD" id="SFLDS00019">
    <property type="entry name" value="Glutathione_Transferase_(cytos"/>
    <property type="match status" value="1"/>
</dbReference>
<dbReference type="SFLD" id="SFLDG00358">
    <property type="entry name" value="Main_(cytGST)"/>
    <property type="match status" value="1"/>
</dbReference>
<dbReference type="SMART" id="SM01183">
    <property type="entry name" value="EF1G"/>
    <property type="match status" value="1"/>
</dbReference>
<dbReference type="SUPFAM" id="SSF89942">
    <property type="entry name" value="eEF1-gamma domain"/>
    <property type="match status" value="1"/>
</dbReference>
<dbReference type="SUPFAM" id="SSF47616">
    <property type="entry name" value="GST C-terminal domain-like"/>
    <property type="match status" value="1"/>
</dbReference>
<dbReference type="SUPFAM" id="SSF52833">
    <property type="entry name" value="Thioredoxin-like"/>
    <property type="match status" value="1"/>
</dbReference>
<dbReference type="PROSITE" id="PS50040">
    <property type="entry name" value="EF1G_C"/>
    <property type="match status" value="1"/>
</dbReference>
<dbReference type="PROSITE" id="PS50405">
    <property type="entry name" value="GST_CTER"/>
    <property type="match status" value="1"/>
</dbReference>
<dbReference type="PROSITE" id="PS50404">
    <property type="entry name" value="GST_NTER"/>
    <property type="match status" value="1"/>
</dbReference>
<protein>
    <recommendedName>
        <fullName>Elongation factor 1-gamma-A</fullName>
        <shortName>EF-1-gamma-A</shortName>
    </recommendedName>
    <alternativeName>
        <fullName>eEF-1B gamma-A</fullName>
    </alternativeName>
    <alternativeName>
        <fullName>p47</fullName>
    </alternativeName>
</protein>
<accession>P26642</accession>
<accession>Q91374</accession>
<comment type="function">
    <text>Probably plays a role in anchoring the complex to other cellular components.</text>
</comment>
<comment type="subunit">
    <text>EF-1 is composed of four subunits: alpha, beta, delta, and gamma.</text>
</comment>
<comment type="PTM">
    <text evidence="3">Phosphorylated by CDK1.</text>
</comment>
<comment type="PTM">
    <text evidence="4">The N-terminus is blocked.</text>
</comment>
<reference key="1">
    <citation type="journal article" date="1991" name="Nucleic Acids Res.">
        <title>Molecular cloning of Xenopus elongation factor 1 gamma, major M-phase promoting factor substrate.</title>
        <authorList>
            <person name="Cormier P."/>
            <person name="Osborne H.B."/>
            <person name="Morales J."/>
            <person name="Bassez T."/>
            <person name="Poulhe R."/>
            <person name="Mazabraud A."/>
            <person name="Mulner-Lorillon O."/>
            <person name="Belle R."/>
        </authorList>
    </citation>
    <scope>NUCLEOTIDE SEQUENCE [MRNA]</scope>
    <source>
        <tissue>Ovary</tissue>
    </source>
</reference>
<reference key="2">
    <citation type="journal article" date="1993" name="Dev. Genet.">
        <title>Expression of elongation factor 1 alpha (EF-1 alpha) and 1 beta gamma (EF-1 beta gamma) are uncoupled in early Xenopus embryos.</title>
        <authorList>
            <person name="Morales J."/>
            <person name="Bassez T."/>
            <person name="Cormier P."/>
            <person name="Mulner-Lorillon O."/>
            <person name="Belle R."/>
            <person name="Osborne H.B."/>
        </authorList>
    </citation>
    <scope>NUCLEOTIDE SEQUENCE [MRNA]</scope>
    <source>
        <tissue>Oocyte</tissue>
    </source>
</reference>
<reference key="3">
    <citation type="journal article" date="1989" name="FEBS Lett.">
        <title>A purified complex from Xenopus oocytes contains a p47 protein, an in vivo substrate of MPF, and a p30 protein respectively homologous to elongation factors EF-1 gamma and EF-1 beta.</title>
        <authorList>
            <person name="Belle R."/>
            <person name="Derancourt J."/>
            <person name="Poulhe R."/>
            <person name="Capony J.-P."/>
            <person name="Ozon R."/>
            <person name="Mulner-Lorillon O."/>
        </authorList>
    </citation>
    <scope>PROTEIN SEQUENCE OF 38-48; 72-79; 268-274; 388-394 AND 415-419</scope>
</reference>
<reference key="4">
    <citation type="journal article" date="1989" name="FEBS Lett.">
        <title>Purification of a p47 phosphoprotein from Xenopus laevis oocytes and identification as an in vivo and in vitro p34cdc2 substrate.</title>
        <authorList>
            <person name="Mulner-Lorillon O."/>
            <person name="Poulhe R."/>
            <person name="Cormier P."/>
            <person name="Labbe J.C."/>
            <person name="Doree M."/>
            <person name="Belle R."/>
        </authorList>
    </citation>
    <scope>PHOSPHORYLATION</scope>
</reference>